<comment type="function">
    <text evidence="1">Regulatory subunit of serine/threonine-protein phosphatase 4. May play a role in regulation of cell division in renal glomeruli. The PPP4C-PPP4R1 PP4 complex may play a role in dephosphorylation and regulation of HDAC3. Plays a role in the inhibition of TNF-induced NF-kappa-B activation by regulating the dephosphorylation of TRAF2.</text>
</comment>
<comment type="subunit">
    <text evidence="1">Serine/threonine-protein phosphatase 4 (PP4) occurs in different assemblies of the catalytic and one or more regulatory subunits. Component of the PP4 complex PPP4C-PPP4R1. Interacts with HDAC3.</text>
</comment>
<comment type="alternative products">
    <event type="alternative splicing"/>
    <isoform>
        <id>Q8K2V1-1</id>
        <name>1</name>
        <sequence type="displayed"/>
    </isoform>
    <isoform>
        <id>Q8K2V1-2</id>
        <name>2</name>
        <sequence type="described" ref="VSP_009470"/>
    </isoform>
</comment>
<accession>Q8K2V1</accession>
<accession>Q8R0R8</accession>
<organism>
    <name type="scientific">Mus musculus</name>
    <name type="common">Mouse</name>
    <dbReference type="NCBI Taxonomy" id="10090"/>
    <lineage>
        <taxon>Eukaryota</taxon>
        <taxon>Metazoa</taxon>
        <taxon>Chordata</taxon>
        <taxon>Craniata</taxon>
        <taxon>Vertebrata</taxon>
        <taxon>Euteleostomi</taxon>
        <taxon>Mammalia</taxon>
        <taxon>Eutheria</taxon>
        <taxon>Euarchontoglires</taxon>
        <taxon>Glires</taxon>
        <taxon>Rodentia</taxon>
        <taxon>Myomorpha</taxon>
        <taxon>Muroidea</taxon>
        <taxon>Muridae</taxon>
        <taxon>Murinae</taxon>
        <taxon>Mus</taxon>
        <taxon>Mus</taxon>
    </lineage>
</organism>
<reference key="1">
    <citation type="journal article" date="2004" name="Genome Res.">
        <title>The status, quality, and expansion of the NIH full-length cDNA project: the Mammalian Gene Collection (MGC).</title>
        <authorList>
            <consortium name="The MGC Project Team"/>
        </authorList>
    </citation>
    <scope>NUCLEOTIDE SEQUENCE [LARGE SCALE MRNA] (ISOFORMS 1 AND 2)</scope>
</reference>
<reference key="2">
    <citation type="journal article" date="2010" name="Cell">
        <title>A tissue-specific atlas of mouse protein phosphorylation and expression.</title>
        <authorList>
            <person name="Huttlin E.L."/>
            <person name="Jedrychowski M.P."/>
            <person name="Elias J.E."/>
            <person name="Goswami T."/>
            <person name="Rad R."/>
            <person name="Beausoleil S.A."/>
            <person name="Villen J."/>
            <person name="Haas W."/>
            <person name="Sowa M.E."/>
            <person name="Gygi S.P."/>
        </authorList>
    </citation>
    <scope>IDENTIFICATION BY MASS SPECTROMETRY [LARGE SCALE ANALYSIS]</scope>
    <source>
        <tissue>Brain</tissue>
        <tissue>Heart</tissue>
        <tissue>Liver</tissue>
        <tissue>Lung</tissue>
        <tissue>Pancreas</tissue>
        <tissue>Spleen</tissue>
        <tissue>Testis</tissue>
    </source>
</reference>
<feature type="chain" id="PRO_0000071528" description="Serine/threonine-protein phosphatase 4 regulatory subunit 1">
    <location>
        <begin position="1"/>
        <end position="951"/>
    </location>
</feature>
<feature type="repeat" description="HEAT 1">
    <location>
        <begin position="26"/>
        <end position="63"/>
    </location>
</feature>
<feature type="repeat" description="HEAT 2">
    <location>
        <begin position="65"/>
        <end position="81"/>
    </location>
</feature>
<feature type="repeat" description="HEAT 3">
    <location>
        <begin position="82"/>
        <end position="119"/>
    </location>
</feature>
<feature type="repeat" description="HEAT 4">
    <location>
        <begin position="127"/>
        <end position="164"/>
    </location>
</feature>
<feature type="repeat" description="HEAT 5">
    <location>
        <begin position="168"/>
        <end position="206"/>
    </location>
</feature>
<feature type="repeat" description="HEAT 6">
    <location>
        <begin position="208"/>
        <end position="246"/>
    </location>
</feature>
<feature type="repeat" description="HEAT 7">
    <location>
        <begin position="248"/>
        <end position="285"/>
    </location>
</feature>
<feature type="repeat" description="HEAT 8">
    <location>
        <begin position="287"/>
        <end position="324"/>
    </location>
</feature>
<feature type="repeat" description="HEAT 9">
    <location>
        <begin position="506"/>
        <end position="543"/>
    </location>
</feature>
<feature type="repeat" description="HEAT 10">
    <location>
        <begin position="699"/>
        <end position="735"/>
    </location>
</feature>
<feature type="repeat" description="HEAT 11">
    <location>
        <begin position="800"/>
        <end position="838"/>
    </location>
</feature>
<feature type="repeat" description="HEAT 12">
    <location>
        <begin position="862"/>
        <end position="899"/>
    </location>
</feature>
<feature type="region of interest" description="Disordered" evidence="2">
    <location>
        <begin position="325"/>
        <end position="377"/>
    </location>
</feature>
<feature type="region of interest" description="Disordered" evidence="2">
    <location>
        <begin position="411"/>
        <end position="451"/>
    </location>
</feature>
<feature type="region of interest" description="Disordered" evidence="2">
    <location>
        <begin position="474"/>
        <end position="499"/>
    </location>
</feature>
<feature type="region of interest" description="Disordered" evidence="2">
    <location>
        <begin position="590"/>
        <end position="612"/>
    </location>
</feature>
<feature type="compositionally biased region" description="Basic and acidic residues" evidence="2">
    <location>
        <begin position="332"/>
        <end position="365"/>
    </location>
</feature>
<feature type="compositionally biased region" description="Polar residues" evidence="2">
    <location>
        <begin position="411"/>
        <end position="421"/>
    </location>
</feature>
<feature type="compositionally biased region" description="Polar residues" evidence="2">
    <location>
        <begin position="430"/>
        <end position="445"/>
    </location>
</feature>
<feature type="compositionally biased region" description="Basic and acidic residues" evidence="2">
    <location>
        <begin position="474"/>
        <end position="487"/>
    </location>
</feature>
<feature type="modified residue" description="Phosphoserine" evidence="1">
    <location>
        <position position="936"/>
    </location>
</feature>
<feature type="splice variant" id="VSP_009470" description="In isoform 2." evidence="3">
    <location>
        <begin position="1"/>
        <end position="349"/>
    </location>
</feature>
<feature type="sequence conflict" description="In Ref. 1; AAH29761." evidence="4" ref="1">
    <original>N</original>
    <variation>S</variation>
    <location>
        <position position="353"/>
    </location>
</feature>
<feature type="sequence conflict" description="In Ref. 1; AAH29761." evidence="4" ref="1">
    <original>S</original>
    <variation>P</variation>
    <location>
        <position position="375"/>
    </location>
</feature>
<feature type="sequence conflict" description="In Ref. 1; AAH29761." evidence="4" ref="1">
    <original>D</original>
    <variation>E</variation>
    <location>
        <position position="529"/>
    </location>
</feature>
<feature type="sequence conflict" description="In Ref. 1; AAH29761." evidence="4" ref="1">
    <original>A</original>
    <variation>V</variation>
    <location>
        <position position="585"/>
    </location>
</feature>
<sequence length="951" mass="106298">MADLSLLQEDLPEDADGLDVDDYSSESDVIIIPSALDFVSQDEMLTPLGRLDKYAASENVFNRQMVARSLLDTLREVCDDERDCIAVLERISRLADDSEPTVRAELMEQVPHIALFCQENRPSIPYAFSKYLLPIVVRYLADQNNQVRKTSQAALLALLEQELIERFDVETKVCPVLIDLTAPDSNDDVKTEAVAIMCKMAPMVGKDITERLILPRFCEMCCDCRMFHVRKVCAANFGDICSVVGQQATEEMLLPRFFQLCSDNVWGVRKACAECFMAVSCATCQEIRRTKLSALFINLISDPSRWVRQAAFQSLGPFISTFANPSSSGQCFKDESKSSEDSSAEDKDRMRDNDVVEEEHRRPEDAPSDLSAPHSSARLESLEGCAAKTPGHSAGDVPAPVDSSLLCTLSSESPQEAASNDENGRKPDTNSKSASRPDAGTSSPEATPLDQDMFNSFHFWRTPLPKIDLDKELQQDPEERLSPERTGDVPAAPLPGPPNITMATRKELEEMIENLEPHMDDPDVKAQVDVLSAALRASSLDAHEETGGVEQRSELQDEVCVSELPDCNISHDTCVPLISAAEENAEATPDYVHGGADVSPGDGFSPDEDRRPKVQDVVPQALLDQYLSMTDPSRAQTVDTEIAKHCAYSLPGVALTLGRQNWHCLRETYETLASDMQWKVRRTLAFSIHELAVILGDQLTAADLVPIFNGFLKDLDEVRIGVLKHLHDFLKLLHIDKRREYLYQLQEFLVTDNSRNWRFRAELAEQLILLLELYSPRDVYDYLRPIALNLCADKVSSVRWISYKLVSEMVKKLHTATPPTFGVDLINELVENFGRCPKWSGRQAFVFVCQTVIEDDCLPMDQFAVHLMPHLLTLANDRVPNVRVLLAKTLRQTLLEKEYFLASASCHQEAVEQTIMALQMDRDSDVKYFASIHPSSTKLSEDAMSTASSTY</sequence>
<evidence type="ECO:0000250" key="1">
    <source>
        <dbReference type="UniProtKB" id="Q8TF05"/>
    </source>
</evidence>
<evidence type="ECO:0000256" key="2">
    <source>
        <dbReference type="SAM" id="MobiDB-lite"/>
    </source>
</evidence>
<evidence type="ECO:0000303" key="3">
    <source>
    </source>
</evidence>
<evidence type="ECO:0000305" key="4"/>
<name>PP4R1_MOUSE</name>
<gene>
    <name type="primary">Ppp4r1</name>
</gene>
<dbReference type="EMBL" id="BC026489">
    <property type="protein sequence ID" value="AAH26489.1"/>
    <property type="molecule type" value="mRNA"/>
</dbReference>
<dbReference type="EMBL" id="BC029761">
    <property type="protein sequence ID" value="AAH29761.1"/>
    <property type="molecule type" value="mRNA"/>
</dbReference>
<dbReference type="CCDS" id="CCDS28941.2">
    <molecule id="Q8K2V1-1"/>
</dbReference>
<dbReference type="RefSeq" id="NP_001107603.1">
    <property type="nucleotide sequence ID" value="NM_001114131.1"/>
</dbReference>
<dbReference type="RefSeq" id="NP_666193.2">
    <property type="nucleotide sequence ID" value="NM_146081.2"/>
</dbReference>
<dbReference type="RefSeq" id="XP_006524957.1">
    <property type="nucleotide sequence ID" value="XM_006524894.3"/>
</dbReference>
<dbReference type="RefSeq" id="XP_006524958.1">
    <molecule id="Q8K2V1-2"/>
    <property type="nucleotide sequence ID" value="XM_006524895.5"/>
</dbReference>
<dbReference type="RefSeq" id="XP_030105907.1">
    <molecule id="Q8K2V1-2"/>
    <property type="nucleotide sequence ID" value="XM_030250047.2"/>
</dbReference>
<dbReference type="BioGRID" id="213994">
    <property type="interactions" value="3"/>
</dbReference>
<dbReference type="ComplexPortal" id="CPX-157">
    <property type="entry name" value="PPP4C-PPP4R1 protein phosphatase 4 complex"/>
</dbReference>
<dbReference type="FunCoup" id="Q8K2V1">
    <property type="interactions" value="854"/>
</dbReference>
<dbReference type="STRING" id="10090.ENSMUSP00000072848"/>
<dbReference type="GlyGen" id="Q8K2V1">
    <property type="glycosylation" value="2 sites, 1 O-linked glycan (1 site)"/>
</dbReference>
<dbReference type="iPTMnet" id="Q8K2V1"/>
<dbReference type="PhosphoSitePlus" id="Q8K2V1"/>
<dbReference type="PaxDb" id="10090-ENSMUSP00000072848"/>
<dbReference type="PeptideAtlas" id="Q8K2V1"/>
<dbReference type="ProteomicsDB" id="289793">
    <molecule id="Q8K2V1-1"/>
</dbReference>
<dbReference type="ProteomicsDB" id="289794">
    <molecule id="Q8K2V1-2"/>
</dbReference>
<dbReference type="Pumba" id="Q8K2V1"/>
<dbReference type="DNASU" id="70351"/>
<dbReference type="GeneID" id="70351"/>
<dbReference type="KEGG" id="mmu:70351"/>
<dbReference type="AGR" id="MGI:1917601"/>
<dbReference type="CTD" id="9989"/>
<dbReference type="MGI" id="MGI:1917601">
    <property type="gene designation" value="Ppp4r1"/>
</dbReference>
<dbReference type="eggNOG" id="KOG0211">
    <property type="taxonomic scope" value="Eukaryota"/>
</dbReference>
<dbReference type="InParanoid" id="Q8K2V1"/>
<dbReference type="OrthoDB" id="340346at2759"/>
<dbReference type="PhylomeDB" id="Q8K2V1"/>
<dbReference type="BioGRID-ORCS" id="70351">
    <property type="hits" value="6 hits in 78 CRISPR screens"/>
</dbReference>
<dbReference type="ChiTaRS" id="Ppp4r1">
    <property type="organism name" value="mouse"/>
</dbReference>
<dbReference type="PRO" id="PR:Q8K2V1"/>
<dbReference type="Proteomes" id="UP000000589">
    <property type="component" value="Unplaced"/>
</dbReference>
<dbReference type="RNAct" id="Q8K2V1">
    <property type="molecule type" value="protein"/>
</dbReference>
<dbReference type="FunFam" id="1.25.10.10:FF:000156">
    <property type="entry name" value="Serine/threonine-protein phosphatase 4 regulatory subunit 1"/>
    <property type="match status" value="1"/>
</dbReference>
<dbReference type="FunFam" id="1.25.10.10:FF:000161">
    <property type="entry name" value="serine/threonine-protein phosphatase 4 regulatory subunit 1"/>
    <property type="match status" value="1"/>
</dbReference>
<dbReference type="Gene3D" id="1.25.10.10">
    <property type="entry name" value="Leucine-rich Repeat Variant"/>
    <property type="match status" value="2"/>
</dbReference>
<dbReference type="InterPro" id="IPR011989">
    <property type="entry name" value="ARM-like"/>
</dbReference>
<dbReference type="InterPro" id="IPR016024">
    <property type="entry name" value="ARM-type_fold"/>
</dbReference>
<dbReference type="InterPro" id="IPR000357">
    <property type="entry name" value="HEAT"/>
</dbReference>
<dbReference type="InterPro" id="IPR021133">
    <property type="entry name" value="HEAT_type_2"/>
</dbReference>
<dbReference type="InterPro" id="IPR051023">
    <property type="entry name" value="PP2A_Regulatory_Subunit_A"/>
</dbReference>
<dbReference type="PANTHER" id="PTHR10648">
    <property type="entry name" value="SERINE/THREONINE-PROTEIN PHOSPHATASE PP2A 65 KDA REGULATORY SUBUNIT"/>
    <property type="match status" value="1"/>
</dbReference>
<dbReference type="PANTHER" id="PTHR10648:SF8">
    <property type="entry name" value="SERINE_THREONINE-PROTEIN PHOSPHATASE 4 REGULATORY SUBUNIT 1"/>
    <property type="match status" value="1"/>
</dbReference>
<dbReference type="Pfam" id="PF02985">
    <property type="entry name" value="HEAT"/>
    <property type="match status" value="1"/>
</dbReference>
<dbReference type="SUPFAM" id="SSF48371">
    <property type="entry name" value="ARM repeat"/>
    <property type="match status" value="1"/>
</dbReference>
<dbReference type="PROSITE" id="PS50077">
    <property type="entry name" value="HEAT_REPEAT"/>
    <property type="match status" value="2"/>
</dbReference>
<keyword id="KW-0025">Alternative splicing</keyword>
<keyword id="KW-0597">Phosphoprotein</keyword>
<keyword id="KW-1185">Reference proteome</keyword>
<keyword id="KW-0677">Repeat</keyword>
<proteinExistence type="evidence at protein level"/>
<protein>
    <recommendedName>
        <fullName>Serine/threonine-protein phosphatase 4 regulatory subunit 1</fullName>
    </recommendedName>
</protein>